<accession>Q31EJ2</accession>
<keyword id="KW-0012">Acyltransferase</keyword>
<keyword id="KW-0028">Amino-acid biosynthesis</keyword>
<keyword id="KW-0963">Cytoplasm</keyword>
<keyword id="KW-0486">Methionine biosynthesis</keyword>
<keyword id="KW-0808">Transferase</keyword>
<feature type="chain" id="PRO_0000231888" description="Homoserine O-succinyltransferase">
    <location>
        <begin position="1"/>
        <end position="385"/>
    </location>
</feature>
<feature type="domain" description="AB hydrolase-1" evidence="1">
    <location>
        <begin position="46"/>
        <end position="355"/>
    </location>
</feature>
<feature type="active site" description="Nucleophile" evidence="1">
    <location>
        <position position="151"/>
    </location>
</feature>
<feature type="active site" evidence="1">
    <location>
        <position position="318"/>
    </location>
</feature>
<feature type="active site" evidence="1">
    <location>
        <position position="351"/>
    </location>
</feature>
<feature type="binding site" evidence="1">
    <location>
        <position position="221"/>
    </location>
    <ligand>
        <name>substrate</name>
    </ligand>
</feature>
<feature type="binding site" evidence="1">
    <location>
        <position position="352"/>
    </location>
    <ligand>
        <name>substrate</name>
    </ligand>
</feature>
<feature type="site" description="Important for acyl-CoA specificity" evidence="1">
    <location>
        <position position="320"/>
    </location>
</feature>
<gene>
    <name evidence="1" type="primary">metXS</name>
    <name type="ordered locus">Tcr_1839</name>
</gene>
<organism>
    <name type="scientific">Hydrogenovibrio crunogenus (strain DSM 25203 / XCL-2)</name>
    <name type="common">Thiomicrospira crunogena</name>
    <dbReference type="NCBI Taxonomy" id="317025"/>
    <lineage>
        <taxon>Bacteria</taxon>
        <taxon>Pseudomonadati</taxon>
        <taxon>Pseudomonadota</taxon>
        <taxon>Gammaproteobacteria</taxon>
        <taxon>Thiotrichales</taxon>
        <taxon>Piscirickettsiaceae</taxon>
        <taxon>Hydrogenovibrio</taxon>
    </lineage>
</organism>
<dbReference type="EC" id="2.3.1.46" evidence="1"/>
<dbReference type="EMBL" id="CP000109">
    <property type="protein sequence ID" value="ABB42431.1"/>
    <property type="molecule type" value="Genomic_DNA"/>
</dbReference>
<dbReference type="SMR" id="Q31EJ2"/>
<dbReference type="STRING" id="317025.Tcr_1839"/>
<dbReference type="ESTHER" id="thicr-metx">
    <property type="family name" value="Homoserine_transacetylase"/>
</dbReference>
<dbReference type="KEGG" id="tcx:Tcr_1839"/>
<dbReference type="eggNOG" id="COG2021">
    <property type="taxonomic scope" value="Bacteria"/>
</dbReference>
<dbReference type="HOGENOM" id="CLU_028760_1_2_6"/>
<dbReference type="OrthoDB" id="9800754at2"/>
<dbReference type="UniPathway" id="UPA00051">
    <property type="reaction ID" value="UER00075"/>
</dbReference>
<dbReference type="GO" id="GO:0005737">
    <property type="term" value="C:cytoplasm"/>
    <property type="evidence" value="ECO:0007669"/>
    <property type="project" value="UniProtKB-SubCell"/>
</dbReference>
<dbReference type="GO" id="GO:0004414">
    <property type="term" value="F:homoserine O-acetyltransferase activity"/>
    <property type="evidence" value="ECO:0007669"/>
    <property type="project" value="TreeGrafter"/>
</dbReference>
<dbReference type="GO" id="GO:0008899">
    <property type="term" value="F:homoserine O-succinyltransferase activity"/>
    <property type="evidence" value="ECO:0007669"/>
    <property type="project" value="UniProtKB-UniRule"/>
</dbReference>
<dbReference type="GO" id="GO:0009092">
    <property type="term" value="P:homoserine metabolic process"/>
    <property type="evidence" value="ECO:0007669"/>
    <property type="project" value="TreeGrafter"/>
</dbReference>
<dbReference type="GO" id="GO:0009086">
    <property type="term" value="P:methionine biosynthetic process"/>
    <property type="evidence" value="ECO:0007669"/>
    <property type="project" value="UniProtKB-UniRule"/>
</dbReference>
<dbReference type="FunFam" id="1.10.1740.110:FF:000001">
    <property type="entry name" value="Homoserine O-acetyltransferase"/>
    <property type="match status" value="1"/>
</dbReference>
<dbReference type="Gene3D" id="1.10.1740.110">
    <property type="match status" value="1"/>
</dbReference>
<dbReference type="Gene3D" id="3.40.50.1820">
    <property type="entry name" value="alpha/beta hydrolase"/>
    <property type="match status" value="1"/>
</dbReference>
<dbReference type="HAMAP" id="MF_00296">
    <property type="entry name" value="MetX_acyltransf"/>
    <property type="match status" value="1"/>
</dbReference>
<dbReference type="InterPro" id="IPR000073">
    <property type="entry name" value="AB_hydrolase_1"/>
</dbReference>
<dbReference type="InterPro" id="IPR029058">
    <property type="entry name" value="AB_hydrolase_fold"/>
</dbReference>
<dbReference type="InterPro" id="IPR008220">
    <property type="entry name" value="HAT_MetX-like"/>
</dbReference>
<dbReference type="NCBIfam" id="TIGR01392">
    <property type="entry name" value="homoserO_Ac_trn"/>
    <property type="match status" value="1"/>
</dbReference>
<dbReference type="NCBIfam" id="NF001209">
    <property type="entry name" value="PRK00175.1"/>
    <property type="match status" value="1"/>
</dbReference>
<dbReference type="PANTHER" id="PTHR32268">
    <property type="entry name" value="HOMOSERINE O-ACETYLTRANSFERASE"/>
    <property type="match status" value="1"/>
</dbReference>
<dbReference type="PANTHER" id="PTHR32268:SF11">
    <property type="entry name" value="HOMOSERINE O-ACETYLTRANSFERASE"/>
    <property type="match status" value="1"/>
</dbReference>
<dbReference type="Pfam" id="PF00561">
    <property type="entry name" value="Abhydrolase_1"/>
    <property type="match status" value="1"/>
</dbReference>
<dbReference type="PIRSF" id="PIRSF000443">
    <property type="entry name" value="Homoser_Ac_trans"/>
    <property type="match status" value="1"/>
</dbReference>
<dbReference type="SUPFAM" id="SSF53474">
    <property type="entry name" value="alpha/beta-Hydrolases"/>
    <property type="match status" value="1"/>
</dbReference>
<protein>
    <recommendedName>
        <fullName evidence="1">Homoserine O-succinyltransferase</fullName>
        <shortName evidence="1">HST</shortName>
        <ecNumber evidence="1">2.3.1.46</ecNumber>
    </recommendedName>
    <alternativeName>
        <fullName evidence="1">Homoserine transsuccinylase</fullName>
        <shortName evidence="1">HTS</shortName>
    </alternativeName>
</protein>
<comment type="function">
    <text evidence="1">Transfers a succinyl group from succinyl-CoA to L-homoserine, forming succinyl-L-homoserine.</text>
</comment>
<comment type="catalytic activity">
    <reaction evidence="1">
        <text>L-homoserine + succinyl-CoA = O-succinyl-L-homoserine + CoA</text>
        <dbReference type="Rhea" id="RHEA:22008"/>
        <dbReference type="ChEBI" id="CHEBI:57287"/>
        <dbReference type="ChEBI" id="CHEBI:57292"/>
        <dbReference type="ChEBI" id="CHEBI:57476"/>
        <dbReference type="ChEBI" id="CHEBI:57661"/>
        <dbReference type="EC" id="2.3.1.46"/>
    </reaction>
</comment>
<comment type="pathway">
    <text evidence="1">Amino-acid biosynthesis; L-methionine biosynthesis via de novo pathway; O-succinyl-L-homoserine from L-homoserine: step 1/1.</text>
</comment>
<comment type="subunit">
    <text evidence="1">Homodimer.</text>
</comment>
<comment type="subcellular location">
    <subcellularLocation>
        <location evidence="1">Cytoplasm</location>
    </subcellularLocation>
</comment>
<comment type="similarity">
    <text evidence="1">Belongs to the AB hydrolase superfamily. MetX family.</text>
</comment>
<sequence>MTDEIGIVTPQKLHVSTPLEMVSGSTLPEYDLAYETYGSLNADKSNAILICHALSGNHHVAGQYEGESTRGWWDGYIGPGKPIDTNRFFVVCSNNLGGCHGSTGPASINPLTGKVYGPDFPIVTCKDWVHSQNTLRQHLEIDAWAAVIGGSMGGMQVLQWTIDFPDQIRHAIVIASAPKLSAQNIAFNEVARRAIMTDPDFHDGRFIEAGTTPKRGLALARMLGHLTYLSDDMMGSKFGRELREGKLNYNFDVEFQVESYLRYQGEKFATKQNFDANTYLLMTKALDYFDPAADFDDDLSKALSGATAKFLIISFTTDWRFSPERSHEIVKALLDNDADISYAEVNSQHGHDAFLLPNDHYEGVFRAYMKRIHAELNHTSLQEGE</sequence>
<name>METXS_HYDCU</name>
<reference key="1">
    <citation type="journal article" date="2006" name="PLoS Biol.">
        <title>The genome of deep-sea vent chemolithoautotroph Thiomicrospira crunogena XCL-2.</title>
        <authorList>
            <person name="Scott K.M."/>
            <person name="Sievert S.M."/>
            <person name="Abril F.N."/>
            <person name="Ball L.A."/>
            <person name="Barrett C.J."/>
            <person name="Blake R.A."/>
            <person name="Boller A.J."/>
            <person name="Chain P.S.G."/>
            <person name="Clark J.A."/>
            <person name="Davis C.R."/>
            <person name="Detter C."/>
            <person name="Do K.F."/>
            <person name="Dobrinski K.P."/>
            <person name="Faza B.I."/>
            <person name="Fitzpatrick K.A."/>
            <person name="Freyermuth S.K."/>
            <person name="Harmer T.L."/>
            <person name="Hauser L.J."/>
            <person name="Huegler M."/>
            <person name="Kerfeld C.A."/>
            <person name="Klotz M.G."/>
            <person name="Kong W.W."/>
            <person name="Land M."/>
            <person name="Lapidus A."/>
            <person name="Larimer F.W."/>
            <person name="Longo D.L."/>
            <person name="Lucas S."/>
            <person name="Malfatti S.A."/>
            <person name="Massey S.E."/>
            <person name="Martin D.D."/>
            <person name="McCuddin Z."/>
            <person name="Meyer F."/>
            <person name="Moore J.L."/>
            <person name="Ocampo L.H. Jr."/>
            <person name="Paul J.H."/>
            <person name="Paulsen I.T."/>
            <person name="Reep D.K."/>
            <person name="Ren Q."/>
            <person name="Ross R.L."/>
            <person name="Sato P.Y."/>
            <person name="Thomas P."/>
            <person name="Tinkham L.E."/>
            <person name="Zeruth G.T."/>
        </authorList>
    </citation>
    <scope>NUCLEOTIDE SEQUENCE [LARGE SCALE GENOMIC DNA]</scope>
    <source>
        <strain>DSM 25203 / XCL-2</strain>
    </source>
</reference>
<evidence type="ECO:0000255" key="1">
    <source>
        <dbReference type="HAMAP-Rule" id="MF_00296"/>
    </source>
</evidence>
<proteinExistence type="inferred from homology"/>